<feature type="chain" id="PRO_0000422951" description="Anti-sigma-E factor RseA">
    <location>
        <begin position="1"/>
        <end position="132"/>
    </location>
</feature>
<feature type="region of interest" description="Disordered" evidence="2">
    <location>
        <begin position="106"/>
        <end position="132"/>
    </location>
</feature>
<feature type="binding site" evidence="1">
    <location>
        <position position="63"/>
    </location>
    <ligand>
        <name>Zn(2+)</name>
        <dbReference type="ChEBI" id="CHEBI:29105"/>
    </ligand>
</feature>
<feature type="binding site" evidence="1">
    <location>
        <position position="67"/>
    </location>
    <ligand>
        <name>Zn(2+)</name>
        <dbReference type="ChEBI" id="CHEBI:29105"/>
    </ligand>
</feature>
<feature type="binding site" evidence="1">
    <location>
        <position position="70"/>
    </location>
    <ligand>
        <name>Zn(2+)</name>
        <dbReference type="ChEBI" id="CHEBI:29105"/>
    </ligand>
</feature>
<feature type="modified residue" description="Phosphothreonine; by PknB" evidence="1">
    <location>
        <position position="36"/>
    </location>
</feature>
<evidence type="ECO:0000250" key="1"/>
<evidence type="ECO:0000256" key="2">
    <source>
        <dbReference type="SAM" id="MobiDB-lite"/>
    </source>
</evidence>
<evidence type="ECO:0000269" key="3">
    <source>
    </source>
</evidence>
<evidence type="ECO:0000305" key="4"/>
<sequence>MADPGHVFRRAFSWLPSQFASQSDAPVGAPRQFGSTEHLSVEAIAAFVDGELRMSAHLRAAHHLSLCPECAAEVDAQSQARTALRESCPIAIPNSLLGMLSQIPHRTPEVTPDVSEQAKFADDPTRGRRKRR</sequence>
<protein>
    <recommendedName>
        <fullName>Anti-sigma-E factor RseA</fullName>
    </recommendedName>
    <alternativeName>
        <fullName>Regulator of SigE</fullName>
    </alternativeName>
    <alternativeName>
        <fullName>Sigma-E anti-sigma factor RseA</fullName>
    </alternativeName>
</protein>
<comment type="function">
    <text evidence="1">An anti-sigma factor for extracytoplasmic function (ECF) sigma factor SigE. ECF sigma factors are held in an inactive form by an anti-sigma factor (By similarity).</text>
</comment>
<comment type="cofactor">
    <cofactor evidence="1">
        <name>Zn(2+)</name>
        <dbReference type="ChEBI" id="CHEBI:29105"/>
    </cofactor>
    <text evidence="1">Binds 1 Zn(2+) ion per subunit.</text>
</comment>
<comment type="subunit">
    <text evidence="3">Interacts with ECF RNA polymerase sigma factor SigE, interaction is abrogated by treatment of cells with H(2)O(2), detergent or vancomycin (the latter 2 cause surface stress). This probably inhibits the interaction of SigE with the RNA polymerase catalytic core.</text>
</comment>
<comment type="subcellular location">
    <subcellularLocation>
        <location evidence="4">Cytoplasm</location>
    </subcellularLocation>
</comment>
<comment type="induction">
    <text evidence="3">Total levels of RseA decrease after detergent or vancomycin treatment of whole cells (at protein level).</text>
</comment>
<comment type="PTM">
    <text evidence="1">Phosphorylated by PknB on Thr-36; can be dephosphorylated (at least in vitro) by PstP. Phosphorylation is the signal for subsequent degradation by the ClpC1-ClpP2 complex (By similarity).</text>
</comment>
<comment type="PTM">
    <text evidence="1">Degraded following vancomycin treatment (surface stress) by a ClpC1-ClpP2 complex.</text>
</comment>
<comment type="disruption phenotype">
    <text evidence="3">No phenotype upon growth in liquid culture.</text>
</comment>
<comment type="similarity">
    <text evidence="4">Belongs to the zinc-associated anti-sigma factor (ZAS) superfamily.</text>
</comment>
<comment type="sequence caution" evidence="4">
    <conflict type="erroneous initiation">
        <sequence resource="EMBL-CDS" id="AFP41388"/>
    </conflict>
    <text>Extended N-terminus.</text>
</comment>
<dbReference type="EMBL" id="CP000480">
    <property type="protein sequence ID" value="ABK72380.1"/>
    <property type="molecule type" value="Genomic_DNA"/>
</dbReference>
<dbReference type="EMBL" id="CP001663">
    <property type="protein sequence ID" value="AFP41388.1"/>
    <property type="status" value="ALT_INIT"/>
    <property type="molecule type" value="Genomic_DNA"/>
</dbReference>
<dbReference type="RefSeq" id="WP_003896479.1">
    <property type="nucleotide sequence ID" value="NZ_SIJM01000019.1"/>
</dbReference>
<dbReference type="RefSeq" id="YP_889321.1">
    <property type="nucleotide sequence ID" value="NC_008596.1"/>
</dbReference>
<dbReference type="SMR" id="A0R2D3"/>
<dbReference type="STRING" id="246196.MSMEG_5071"/>
<dbReference type="PaxDb" id="246196-MSMEI_4944"/>
<dbReference type="GeneID" id="93459737"/>
<dbReference type="KEGG" id="msb:LJ00_25080"/>
<dbReference type="KEGG" id="msg:MSMEI_4944"/>
<dbReference type="KEGG" id="msm:MSMEG_5071"/>
<dbReference type="PATRIC" id="fig|246196.19.peg.4949"/>
<dbReference type="eggNOG" id="COG5662">
    <property type="taxonomic scope" value="Bacteria"/>
</dbReference>
<dbReference type="OrthoDB" id="4425192at2"/>
<dbReference type="Proteomes" id="UP000000757">
    <property type="component" value="Chromosome"/>
</dbReference>
<dbReference type="Proteomes" id="UP000006158">
    <property type="component" value="Chromosome"/>
</dbReference>
<dbReference type="GO" id="GO:0005737">
    <property type="term" value="C:cytoplasm"/>
    <property type="evidence" value="ECO:0007669"/>
    <property type="project" value="UniProtKB-SubCell"/>
</dbReference>
<dbReference type="GO" id="GO:0046872">
    <property type="term" value="F:metal ion binding"/>
    <property type="evidence" value="ECO:0007669"/>
    <property type="project" value="UniProtKB-KW"/>
</dbReference>
<dbReference type="Gene3D" id="1.10.10.1320">
    <property type="entry name" value="Anti-sigma factor, zinc-finger domain"/>
    <property type="match status" value="1"/>
</dbReference>
<dbReference type="InterPro" id="IPR048186">
    <property type="entry name" value="Anti_sigE_RseA-like"/>
</dbReference>
<dbReference type="InterPro" id="IPR041916">
    <property type="entry name" value="Anti_sigma_zinc_sf"/>
</dbReference>
<dbReference type="NCBIfam" id="NF041468">
    <property type="entry name" value="anti_sig_RseA"/>
    <property type="match status" value="1"/>
</dbReference>
<proteinExistence type="evidence at protein level"/>
<reference key="1">
    <citation type="submission" date="2006-10" db="EMBL/GenBank/DDBJ databases">
        <authorList>
            <person name="Fleischmann R.D."/>
            <person name="Dodson R.J."/>
            <person name="Haft D.H."/>
            <person name="Merkel J.S."/>
            <person name="Nelson W.C."/>
            <person name="Fraser C.M."/>
        </authorList>
    </citation>
    <scope>NUCLEOTIDE SEQUENCE [LARGE SCALE GENOMIC DNA]</scope>
    <source>
        <strain>ATCC 700084 / mc(2)155</strain>
    </source>
</reference>
<reference key="2">
    <citation type="journal article" date="2007" name="Genome Biol.">
        <title>Interrupted coding sequences in Mycobacterium smegmatis: authentic mutations or sequencing errors?</title>
        <authorList>
            <person name="Deshayes C."/>
            <person name="Perrodou E."/>
            <person name="Gallien S."/>
            <person name="Euphrasie D."/>
            <person name="Schaeffer C."/>
            <person name="Van-Dorsselaer A."/>
            <person name="Poch O."/>
            <person name="Lecompte O."/>
            <person name="Reyrat J.-M."/>
        </authorList>
    </citation>
    <scope>NUCLEOTIDE SEQUENCE [LARGE SCALE GENOMIC DNA]</scope>
    <source>
        <strain>ATCC 700084 / mc(2)155</strain>
    </source>
</reference>
<reference key="3">
    <citation type="journal article" date="2009" name="Genome Res.">
        <title>Ortho-proteogenomics: multiple proteomes investigation through orthology and a new MS-based protocol.</title>
        <authorList>
            <person name="Gallien S."/>
            <person name="Perrodou E."/>
            <person name="Carapito C."/>
            <person name="Deshayes C."/>
            <person name="Reyrat J.-M."/>
            <person name="Van Dorsselaer A."/>
            <person name="Poch O."/>
            <person name="Schaeffer C."/>
            <person name="Lecompte O."/>
        </authorList>
    </citation>
    <scope>NUCLEOTIDE SEQUENCE [LARGE SCALE GENOMIC DNA]</scope>
    <source>
        <strain>ATCC 700084 / mc(2)155</strain>
    </source>
</reference>
<reference key="4">
    <citation type="journal article" date="2010" name="Mol. Microbiol.">
        <title>RseA, the SigE specific anti-sigma factor of Mycobacterium tuberculosis, is inactivated by phosphorylation-dependent ClpC1P2 proteolysis.</title>
        <authorList>
            <person name="Barik S."/>
            <person name="Sureka K."/>
            <person name="Mukherjee P."/>
            <person name="Basu J."/>
            <person name="Kundu M."/>
        </authorList>
    </citation>
    <scope>INTERACTION WITH SIGE</scope>
    <scope>DISRUPTION PHENOTYPE</scope>
    <scope>INDUCTION</scope>
    <source>
        <strain>ATCC 700084 / mc(2)155</strain>
    </source>
</reference>
<gene>
    <name type="primary">rseA</name>
    <name type="ordered locus">MSMEG_5071</name>
    <name type="ordered locus">MSMEI_4944</name>
</gene>
<organism>
    <name type="scientific">Mycolicibacterium smegmatis (strain ATCC 700084 / mc(2)155)</name>
    <name type="common">Mycobacterium smegmatis</name>
    <dbReference type="NCBI Taxonomy" id="246196"/>
    <lineage>
        <taxon>Bacteria</taxon>
        <taxon>Bacillati</taxon>
        <taxon>Actinomycetota</taxon>
        <taxon>Actinomycetes</taxon>
        <taxon>Mycobacteriales</taxon>
        <taxon>Mycobacteriaceae</taxon>
        <taxon>Mycolicibacterium</taxon>
    </lineage>
</organism>
<name>RSEA_MYCS2</name>
<accession>A0R2D3</accession>
<accession>I7FRJ7</accession>
<keyword id="KW-0963">Cytoplasm</keyword>
<keyword id="KW-0479">Metal-binding</keyword>
<keyword id="KW-0597">Phosphoprotein</keyword>
<keyword id="KW-1185">Reference proteome</keyword>
<keyword id="KW-0804">Transcription</keyword>
<keyword id="KW-0805">Transcription regulation</keyword>
<keyword id="KW-0862">Zinc</keyword>